<dbReference type="EMBL" id="AE017224">
    <property type="protein sequence ID" value="AAX75701.1"/>
    <property type="molecule type" value="Genomic_DNA"/>
</dbReference>
<dbReference type="RefSeq" id="WP_002965682.1">
    <property type="nucleotide sequence ID" value="NC_006933.1"/>
</dbReference>
<dbReference type="SMR" id="Q579I3"/>
<dbReference type="EnsemblBacteria" id="AAX75701">
    <property type="protein sequence ID" value="AAX75701"/>
    <property type="gene ID" value="BruAb2_0267"/>
</dbReference>
<dbReference type="GeneID" id="97533017"/>
<dbReference type="KEGG" id="bmb:BruAb2_0267"/>
<dbReference type="HOGENOM" id="CLU_159258_0_1_5"/>
<dbReference type="Proteomes" id="UP000000540">
    <property type="component" value="Chromosome II"/>
</dbReference>
<dbReference type="GO" id="GO:1990904">
    <property type="term" value="C:ribonucleoprotein complex"/>
    <property type="evidence" value="ECO:0007669"/>
    <property type="project" value="UniProtKB-KW"/>
</dbReference>
<dbReference type="GO" id="GO:0005840">
    <property type="term" value="C:ribosome"/>
    <property type="evidence" value="ECO:0007669"/>
    <property type="project" value="UniProtKB-KW"/>
</dbReference>
<dbReference type="GO" id="GO:0003735">
    <property type="term" value="F:structural constituent of ribosome"/>
    <property type="evidence" value="ECO:0007669"/>
    <property type="project" value="InterPro"/>
</dbReference>
<dbReference type="GO" id="GO:0006412">
    <property type="term" value="P:translation"/>
    <property type="evidence" value="ECO:0007669"/>
    <property type="project" value="UniProtKB-UniRule"/>
</dbReference>
<dbReference type="Gene3D" id="1.20.5.1150">
    <property type="entry name" value="Ribosomal protein S8"/>
    <property type="match status" value="1"/>
</dbReference>
<dbReference type="HAMAP" id="MF_00358">
    <property type="entry name" value="Ribosomal_bS21"/>
    <property type="match status" value="1"/>
</dbReference>
<dbReference type="InterPro" id="IPR001911">
    <property type="entry name" value="Ribosomal_bS21"/>
</dbReference>
<dbReference type="InterPro" id="IPR018278">
    <property type="entry name" value="Ribosomal_bS21_CS"/>
</dbReference>
<dbReference type="InterPro" id="IPR038380">
    <property type="entry name" value="Ribosomal_bS21_sf"/>
</dbReference>
<dbReference type="NCBIfam" id="TIGR00030">
    <property type="entry name" value="S21p"/>
    <property type="match status" value="1"/>
</dbReference>
<dbReference type="PANTHER" id="PTHR21109">
    <property type="entry name" value="MITOCHONDRIAL 28S RIBOSOMAL PROTEIN S21"/>
    <property type="match status" value="1"/>
</dbReference>
<dbReference type="PANTHER" id="PTHR21109:SF0">
    <property type="entry name" value="SMALL RIBOSOMAL SUBUNIT PROTEIN BS21M"/>
    <property type="match status" value="1"/>
</dbReference>
<dbReference type="Pfam" id="PF01165">
    <property type="entry name" value="Ribosomal_S21"/>
    <property type="match status" value="1"/>
</dbReference>
<dbReference type="PRINTS" id="PR00976">
    <property type="entry name" value="RIBOSOMALS21"/>
</dbReference>
<dbReference type="PROSITE" id="PS01181">
    <property type="entry name" value="RIBOSOMAL_S21"/>
    <property type="match status" value="1"/>
</dbReference>
<sequence length="75" mass="8817">MQVLVRDNNVDQALRALKKKMQREGIFREMKMRGHYEKPSEKRAREKAEAVRRARKLARKRAQREGLIGGRTGAR</sequence>
<feature type="chain" id="PRO_0000266634" description="Small ribosomal subunit protein bS21">
    <location>
        <begin position="1"/>
        <end position="75"/>
    </location>
</feature>
<protein>
    <recommendedName>
        <fullName evidence="1">Small ribosomal subunit protein bS21</fullName>
    </recommendedName>
    <alternativeName>
        <fullName evidence="2">30S ribosomal protein S21</fullName>
    </alternativeName>
</protein>
<gene>
    <name evidence="1" type="primary">rpsU</name>
    <name type="ordered locus">BruAb2_0267</name>
</gene>
<keyword id="KW-0687">Ribonucleoprotein</keyword>
<keyword id="KW-0689">Ribosomal protein</keyword>
<evidence type="ECO:0000255" key="1">
    <source>
        <dbReference type="HAMAP-Rule" id="MF_00358"/>
    </source>
</evidence>
<evidence type="ECO:0000305" key="2"/>
<reference key="1">
    <citation type="journal article" date="2005" name="J. Bacteriol.">
        <title>Completion of the genome sequence of Brucella abortus and comparison to the highly similar genomes of Brucella melitensis and Brucella suis.</title>
        <authorList>
            <person name="Halling S.M."/>
            <person name="Peterson-Burch B.D."/>
            <person name="Bricker B.J."/>
            <person name="Zuerner R.L."/>
            <person name="Qing Z."/>
            <person name="Li L.-L."/>
            <person name="Kapur V."/>
            <person name="Alt D.P."/>
            <person name="Olsen S.C."/>
        </authorList>
    </citation>
    <scope>NUCLEOTIDE SEQUENCE [LARGE SCALE GENOMIC DNA]</scope>
    <source>
        <strain>9-941</strain>
    </source>
</reference>
<comment type="similarity">
    <text evidence="1">Belongs to the bacterial ribosomal protein bS21 family.</text>
</comment>
<name>RS21_BRUAB</name>
<proteinExistence type="inferred from homology"/>
<organism>
    <name type="scientific">Brucella abortus biovar 1 (strain 9-941)</name>
    <dbReference type="NCBI Taxonomy" id="262698"/>
    <lineage>
        <taxon>Bacteria</taxon>
        <taxon>Pseudomonadati</taxon>
        <taxon>Pseudomonadota</taxon>
        <taxon>Alphaproteobacteria</taxon>
        <taxon>Hyphomicrobiales</taxon>
        <taxon>Brucellaceae</taxon>
        <taxon>Brucella/Ochrobactrum group</taxon>
        <taxon>Brucella</taxon>
    </lineage>
</organism>
<accession>Q579I3</accession>